<accession>P0DX99</accession>
<sequence length="98" mass="10600">MKFSKLSLTLALILTQVLFVLCGKINEDFMKHGLESQALHDEIRKPIDSENPDTERLLDCLLDNRVCSSDKDCCGMTPSCTMGLCVPSVGGLVGGILG</sequence>
<feature type="signal peptide" evidence="3">
    <location>
        <begin position="1"/>
        <end position="22"/>
    </location>
</feature>
<feature type="propeptide" id="PRO_0000459669" evidence="2">
    <location>
        <begin position="24"/>
        <end position="56"/>
    </location>
</feature>
<feature type="chain" id="PRO_0000459670" description="Omega-hexatoxin-Hr2b" evidence="3">
    <location>
        <begin position="57"/>
        <end position="97"/>
    </location>
</feature>
<feature type="modified residue" description="Leucine amide" evidence="2">
    <location>
        <position position="97"/>
    </location>
</feature>
<feature type="disulfide bond" evidence="1">
    <location>
        <begin position="60"/>
        <end position="74"/>
    </location>
</feature>
<feature type="disulfide bond" evidence="1">
    <location>
        <begin position="67"/>
        <end position="80"/>
    </location>
</feature>
<feature type="disulfide bond" evidence="1">
    <location>
        <begin position="73"/>
        <end position="85"/>
    </location>
</feature>
<protein>
    <recommendedName>
        <fullName evidence="4">Omega-hexatoxin-Hr2b</fullName>
        <shortName evidence="4">Omega-HXTX-Hr2b</shortName>
    </recommendedName>
</protein>
<comment type="function">
    <text evidence="1">Potent inhibitor of insect, but not mammalian, voltage-gated calcium channels (Cav).</text>
</comment>
<comment type="subcellular location">
    <subcellularLocation>
        <location evidence="6">Secreted</location>
    </subcellularLocation>
</comment>
<comment type="tissue specificity">
    <text evidence="6">Expressed by the venom gland.</text>
</comment>
<comment type="domain">
    <text evidence="5">The presence of a 'disulfide through disulfide knot' structurally defines this protein as a knottin.</text>
</comment>
<comment type="similarity">
    <text evidence="5">Belongs to the neurotoxin 15 family. 02 (omega-actx) subfamily.</text>
</comment>
<comment type="online information" name="ArachnoServer">
    <link uri="https://arachnoserver.qfab.org/toxincard.html?id=1254"/>
</comment>
<proteinExistence type="inferred from homology"/>
<dbReference type="SMR" id="P0DX99"/>
<dbReference type="GO" id="GO:0005576">
    <property type="term" value="C:extracellular region"/>
    <property type="evidence" value="ECO:0007669"/>
    <property type="project" value="UniProtKB-SubCell"/>
</dbReference>
<dbReference type="GO" id="GO:0005246">
    <property type="term" value="F:calcium channel regulator activity"/>
    <property type="evidence" value="ECO:0007669"/>
    <property type="project" value="UniProtKB-KW"/>
</dbReference>
<dbReference type="GO" id="GO:0019871">
    <property type="term" value="F:sodium channel inhibitor activity"/>
    <property type="evidence" value="ECO:0007669"/>
    <property type="project" value="InterPro"/>
</dbReference>
<dbReference type="GO" id="GO:0090729">
    <property type="term" value="F:toxin activity"/>
    <property type="evidence" value="ECO:0007669"/>
    <property type="project" value="UniProtKB-KW"/>
</dbReference>
<dbReference type="Gene3D" id="4.10.40.10">
    <property type="match status" value="1"/>
</dbReference>
<dbReference type="InterPro" id="IPR013139">
    <property type="entry name" value="Omega_atracotoxin_CS2"/>
</dbReference>
<dbReference type="InterPro" id="IPR012628">
    <property type="entry name" value="Toxin_23"/>
</dbReference>
<dbReference type="Pfam" id="PF08093">
    <property type="entry name" value="Toxin_23"/>
    <property type="match status" value="1"/>
</dbReference>
<dbReference type="SUPFAM" id="SSF57059">
    <property type="entry name" value="omega toxin-like"/>
    <property type="match status" value="1"/>
</dbReference>
<dbReference type="PROSITE" id="PS60017">
    <property type="entry name" value="OMEGA_ACTX_2"/>
    <property type="match status" value="1"/>
</dbReference>
<reference key="1">
    <citation type="journal article" date="2020" name="Proc. Natl. Acad. Sci. U.S.A.">
        <title>Structural venomics reveals evolution of a complex venom by duplication and diversification of an ancient peptide-encoding gene.</title>
        <authorList>
            <person name="Pineda S.S."/>
            <person name="Chin Y.K."/>
            <person name="Undheim E.A.B."/>
            <person name="Senff S."/>
            <person name="Mobli M."/>
            <person name="Dauly C."/>
            <person name="Escoubas P."/>
            <person name="Nicholson G.M."/>
            <person name="Kaas Q."/>
            <person name="Guo S."/>
            <person name="Herzig V."/>
            <person name="Mattick J.S."/>
            <person name="King G.F."/>
        </authorList>
    </citation>
    <scope>NUCLEOTIDE SEQUENCE [MRNA]</scope>
    <source>
        <tissue>Venom gland</tissue>
    </source>
</reference>
<organism>
    <name type="scientific">Atrax robustus</name>
    <name type="common">Sydney funnel-web spider</name>
    <dbReference type="NCBI Taxonomy" id="6903"/>
    <lineage>
        <taxon>Eukaryota</taxon>
        <taxon>Metazoa</taxon>
        <taxon>Ecdysozoa</taxon>
        <taxon>Arthropoda</taxon>
        <taxon>Chelicerata</taxon>
        <taxon>Arachnida</taxon>
        <taxon>Araneae</taxon>
        <taxon>Mygalomorphae</taxon>
        <taxon>Hexathelidae</taxon>
        <taxon>Atrax</taxon>
    </lineage>
</organism>
<name>TO2B_ATRRO</name>
<evidence type="ECO:0000250" key="1">
    <source>
        <dbReference type="UniProtKB" id="P82852"/>
    </source>
</evidence>
<evidence type="ECO:0000250" key="2">
    <source>
        <dbReference type="UniProtKB" id="Q9BJV9"/>
    </source>
</evidence>
<evidence type="ECO:0000255" key="3"/>
<evidence type="ECO:0000303" key="4">
    <source>
    </source>
</evidence>
<evidence type="ECO:0000305" key="5"/>
<evidence type="ECO:0000305" key="6">
    <source>
    </source>
</evidence>
<keyword id="KW-0027">Amidation</keyword>
<keyword id="KW-0108">Calcium channel impairing toxin</keyword>
<keyword id="KW-1015">Disulfide bond</keyword>
<keyword id="KW-0872">Ion channel impairing toxin</keyword>
<keyword id="KW-0960">Knottin</keyword>
<keyword id="KW-0528">Neurotoxin</keyword>
<keyword id="KW-0964">Secreted</keyword>
<keyword id="KW-0732">Signal</keyword>
<keyword id="KW-0800">Toxin</keyword>
<keyword id="KW-1218">Voltage-gated calcium channel impairing toxin</keyword>